<feature type="chain" id="PRO_0000207717" description="Calpain-6">
    <location>
        <begin position="1"/>
        <end position="641"/>
    </location>
</feature>
<feature type="domain" description="Calpain catalytic" evidence="3">
    <location>
        <begin position="26"/>
        <end position="343"/>
    </location>
</feature>
<feature type="domain" description="C2" evidence="2">
    <location>
        <begin position="498"/>
        <end position="621"/>
    </location>
</feature>
<feature type="region of interest" description="Domain III">
    <location>
        <begin position="344"/>
        <end position="495"/>
    </location>
</feature>
<feature type="sequence variant" id="VAR_021084" description="In dbSNP:rs12013711." evidence="6">
    <original>V</original>
    <variation>L</variation>
    <location>
        <position position="277"/>
    </location>
</feature>
<feature type="sequence variant" id="VAR_036048" description="In a colorectal cancer sample; somatic mutation." evidence="4">
    <original>G</original>
    <variation>R</variation>
    <location>
        <position position="358"/>
    </location>
</feature>
<feature type="sequence variant" id="VAR_051515" description="In dbSNP:rs12851517.">
    <original>T</original>
    <variation>I</variation>
    <location>
        <position position="518"/>
    </location>
</feature>
<feature type="sequence conflict" description="In Ref. 3; CAA04051." evidence="7" ref="3">
    <original>N</original>
    <variation>F</variation>
    <location>
        <position position="42"/>
    </location>
</feature>
<feature type="sequence conflict" description="In Ref. 2; AAB86605." evidence="7" ref="2">
    <original>RP</original>
    <variation>KT</variation>
    <location>
        <begin position="415"/>
        <end position="416"/>
    </location>
</feature>
<organism>
    <name type="scientific">Homo sapiens</name>
    <name type="common">Human</name>
    <dbReference type="NCBI Taxonomy" id="9606"/>
    <lineage>
        <taxon>Eukaryota</taxon>
        <taxon>Metazoa</taxon>
        <taxon>Chordata</taxon>
        <taxon>Craniata</taxon>
        <taxon>Vertebrata</taxon>
        <taxon>Euteleostomi</taxon>
        <taxon>Mammalia</taxon>
        <taxon>Eutheria</taxon>
        <taxon>Euarchontoglires</taxon>
        <taxon>Primates</taxon>
        <taxon>Haplorrhini</taxon>
        <taxon>Catarrhini</taxon>
        <taxon>Hominidae</taxon>
        <taxon>Homo</taxon>
    </lineage>
</organism>
<proteinExistence type="evidence at protein level"/>
<reference key="1">
    <citation type="journal article" date="1997" name="Genomics">
        <title>A new subfamily of vertebrate calpains lacking a calmodulin-like domain: implications for calpain regulation and evolution.</title>
        <authorList>
            <person name="Dear T.N."/>
            <person name="Matena K."/>
            <person name="Vingron M."/>
            <person name="Boehm T."/>
        </authorList>
    </citation>
    <scope>NUCLEOTIDE SEQUENCE [MRNA]</scope>
</reference>
<reference key="2">
    <citation type="submission" date="1997-10" db="EMBL/GenBank/DDBJ databases">
        <authorList>
            <person name="Crotty P.L."/>
        </authorList>
    </citation>
    <scope>NUCLEOTIDE SEQUENCE [MRNA]</scope>
    <source>
        <tissue>Placenta</tissue>
    </source>
</reference>
<reference key="3">
    <citation type="submission" date="1997-07" db="EMBL/GenBank/DDBJ databases">
        <title>A novel X-linked calpain-like protease.</title>
        <authorList>
            <person name="Belsito A."/>
            <person name="Piluso G."/>
            <person name="Nigro V."/>
        </authorList>
    </citation>
    <scope>NUCLEOTIDE SEQUENCE [MRNA]</scope>
</reference>
<reference key="4">
    <citation type="submission" date="2004-10" db="EMBL/GenBank/DDBJ databases">
        <authorList>
            <consortium name="NIEHS SNPs program"/>
        </authorList>
    </citation>
    <scope>NUCLEOTIDE SEQUENCE [GENOMIC DNA]</scope>
    <scope>VARIANT LEU-277</scope>
</reference>
<reference key="5">
    <citation type="journal article" date="2005" name="Nature">
        <title>The DNA sequence of the human X chromosome.</title>
        <authorList>
            <person name="Ross M.T."/>
            <person name="Grafham D.V."/>
            <person name="Coffey A.J."/>
            <person name="Scherer S."/>
            <person name="McLay K."/>
            <person name="Muzny D."/>
            <person name="Platzer M."/>
            <person name="Howell G.R."/>
            <person name="Burrows C."/>
            <person name="Bird C.P."/>
            <person name="Frankish A."/>
            <person name="Lovell F.L."/>
            <person name="Howe K.L."/>
            <person name="Ashurst J.L."/>
            <person name="Fulton R.S."/>
            <person name="Sudbrak R."/>
            <person name="Wen G."/>
            <person name="Jones M.C."/>
            <person name="Hurles M.E."/>
            <person name="Andrews T.D."/>
            <person name="Scott C.E."/>
            <person name="Searle S."/>
            <person name="Ramser J."/>
            <person name="Whittaker A."/>
            <person name="Deadman R."/>
            <person name="Carter N.P."/>
            <person name="Hunt S.E."/>
            <person name="Chen R."/>
            <person name="Cree A."/>
            <person name="Gunaratne P."/>
            <person name="Havlak P."/>
            <person name="Hodgson A."/>
            <person name="Metzker M.L."/>
            <person name="Richards S."/>
            <person name="Scott G."/>
            <person name="Steffen D."/>
            <person name="Sodergren E."/>
            <person name="Wheeler D.A."/>
            <person name="Worley K.C."/>
            <person name="Ainscough R."/>
            <person name="Ambrose K.D."/>
            <person name="Ansari-Lari M.A."/>
            <person name="Aradhya S."/>
            <person name="Ashwell R.I."/>
            <person name="Babbage A.K."/>
            <person name="Bagguley C.L."/>
            <person name="Ballabio A."/>
            <person name="Banerjee R."/>
            <person name="Barker G.E."/>
            <person name="Barlow K.F."/>
            <person name="Barrett I.P."/>
            <person name="Bates K.N."/>
            <person name="Beare D.M."/>
            <person name="Beasley H."/>
            <person name="Beasley O."/>
            <person name="Beck A."/>
            <person name="Bethel G."/>
            <person name="Blechschmidt K."/>
            <person name="Brady N."/>
            <person name="Bray-Allen S."/>
            <person name="Bridgeman A.M."/>
            <person name="Brown A.J."/>
            <person name="Brown M.J."/>
            <person name="Bonnin D."/>
            <person name="Bruford E.A."/>
            <person name="Buhay C."/>
            <person name="Burch P."/>
            <person name="Burford D."/>
            <person name="Burgess J."/>
            <person name="Burrill W."/>
            <person name="Burton J."/>
            <person name="Bye J.M."/>
            <person name="Carder C."/>
            <person name="Carrel L."/>
            <person name="Chako J."/>
            <person name="Chapman J.C."/>
            <person name="Chavez D."/>
            <person name="Chen E."/>
            <person name="Chen G."/>
            <person name="Chen Y."/>
            <person name="Chen Z."/>
            <person name="Chinault C."/>
            <person name="Ciccodicola A."/>
            <person name="Clark S.Y."/>
            <person name="Clarke G."/>
            <person name="Clee C.M."/>
            <person name="Clegg S."/>
            <person name="Clerc-Blankenburg K."/>
            <person name="Clifford K."/>
            <person name="Cobley V."/>
            <person name="Cole C.G."/>
            <person name="Conquer J.S."/>
            <person name="Corby N."/>
            <person name="Connor R.E."/>
            <person name="David R."/>
            <person name="Davies J."/>
            <person name="Davis C."/>
            <person name="Davis J."/>
            <person name="Delgado O."/>
            <person name="Deshazo D."/>
            <person name="Dhami P."/>
            <person name="Ding Y."/>
            <person name="Dinh H."/>
            <person name="Dodsworth S."/>
            <person name="Draper H."/>
            <person name="Dugan-Rocha S."/>
            <person name="Dunham A."/>
            <person name="Dunn M."/>
            <person name="Durbin K.J."/>
            <person name="Dutta I."/>
            <person name="Eades T."/>
            <person name="Ellwood M."/>
            <person name="Emery-Cohen A."/>
            <person name="Errington H."/>
            <person name="Evans K.L."/>
            <person name="Faulkner L."/>
            <person name="Francis F."/>
            <person name="Frankland J."/>
            <person name="Fraser A.E."/>
            <person name="Galgoczy P."/>
            <person name="Gilbert J."/>
            <person name="Gill R."/>
            <person name="Gloeckner G."/>
            <person name="Gregory S.G."/>
            <person name="Gribble S."/>
            <person name="Griffiths C."/>
            <person name="Grocock R."/>
            <person name="Gu Y."/>
            <person name="Gwilliam R."/>
            <person name="Hamilton C."/>
            <person name="Hart E.A."/>
            <person name="Hawes A."/>
            <person name="Heath P.D."/>
            <person name="Heitmann K."/>
            <person name="Hennig S."/>
            <person name="Hernandez J."/>
            <person name="Hinzmann B."/>
            <person name="Ho S."/>
            <person name="Hoffs M."/>
            <person name="Howden P.J."/>
            <person name="Huckle E.J."/>
            <person name="Hume J."/>
            <person name="Hunt P.J."/>
            <person name="Hunt A.R."/>
            <person name="Isherwood J."/>
            <person name="Jacob L."/>
            <person name="Johnson D."/>
            <person name="Jones S."/>
            <person name="de Jong P.J."/>
            <person name="Joseph S.S."/>
            <person name="Keenan S."/>
            <person name="Kelly S."/>
            <person name="Kershaw J.K."/>
            <person name="Khan Z."/>
            <person name="Kioschis P."/>
            <person name="Klages S."/>
            <person name="Knights A.J."/>
            <person name="Kosiura A."/>
            <person name="Kovar-Smith C."/>
            <person name="Laird G.K."/>
            <person name="Langford C."/>
            <person name="Lawlor S."/>
            <person name="Leversha M."/>
            <person name="Lewis L."/>
            <person name="Liu W."/>
            <person name="Lloyd C."/>
            <person name="Lloyd D.M."/>
            <person name="Loulseged H."/>
            <person name="Loveland J.E."/>
            <person name="Lovell J.D."/>
            <person name="Lozado R."/>
            <person name="Lu J."/>
            <person name="Lyne R."/>
            <person name="Ma J."/>
            <person name="Maheshwari M."/>
            <person name="Matthews L.H."/>
            <person name="McDowall J."/>
            <person name="McLaren S."/>
            <person name="McMurray A."/>
            <person name="Meidl P."/>
            <person name="Meitinger T."/>
            <person name="Milne S."/>
            <person name="Miner G."/>
            <person name="Mistry S.L."/>
            <person name="Morgan M."/>
            <person name="Morris S."/>
            <person name="Mueller I."/>
            <person name="Mullikin J.C."/>
            <person name="Nguyen N."/>
            <person name="Nordsiek G."/>
            <person name="Nyakatura G."/>
            <person name="O'dell C.N."/>
            <person name="Okwuonu G."/>
            <person name="Palmer S."/>
            <person name="Pandian R."/>
            <person name="Parker D."/>
            <person name="Parrish J."/>
            <person name="Pasternak S."/>
            <person name="Patel D."/>
            <person name="Pearce A.V."/>
            <person name="Pearson D.M."/>
            <person name="Pelan S.E."/>
            <person name="Perez L."/>
            <person name="Porter K.M."/>
            <person name="Ramsey Y."/>
            <person name="Reichwald K."/>
            <person name="Rhodes S."/>
            <person name="Ridler K.A."/>
            <person name="Schlessinger D."/>
            <person name="Schueler M.G."/>
            <person name="Sehra H.K."/>
            <person name="Shaw-Smith C."/>
            <person name="Shen H."/>
            <person name="Sheridan E.M."/>
            <person name="Shownkeen R."/>
            <person name="Skuce C.D."/>
            <person name="Smith M.L."/>
            <person name="Sotheran E.C."/>
            <person name="Steingruber H.E."/>
            <person name="Steward C.A."/>
            <person name="Storey R."/>
            <person name="Swann R.M."/>
            <person name="Swarbreck D."/>
            <person name="Tabor P.E."/>
            <person name="Taudien S."/>
            <person name="Taylor T."/>
            <person name="Teague B."/>
            <person name="Thomas K."/>
            <person name="Thorpe A."/>
            <person name="Timms K."/>
            <person name="Tracey A."/>
            <person name="Trevanion S."/>
            <person name="Tromans A.C."/>
            <person name="d'Urso M."/>
            <person name="Verduzco D."/>
            <person name="Villasana D."/>
            <person name="Waldron L."/>
            <person name="Wall M."/>
            <person name="Wang Q."/>
            <person name="Warren J."/>
            <person name="Warry G.L."/>
            <person name="Wei X."/>
            <person name="West A."/>
            <person name="Whitehead S.L."/>
            <person name="Whiteley M.N."/>
            <person name="Wilkinson J.E."/>
            <person name="Willey D.L."/>
            <person name="Williams G."/>
            <person name="Williams L."/>
            <person name="Williamson A."/>
            <person name="Williamson H."/>
            <person name="Wilming L."/>
            <person name="Woodmansey R.L."/>
            <person name="Wray P.W."/>
            <person name="Yen J."/>
            <person name="Zhang J."/>
            <person name="Zhou J."/>
            <person name="Zoghbi H."/>
            <person name="Zorilla S."/>
            <person name="Buck D."/>
            <person name="Reinhardt R."/>
            <person name="Poustka A."/>
            <person name="Rosenthal A."/>
            <person name="Lehrach H."/>
            <person name="Meindl A."/>
            <person name="Minx P.J."/>
            <person name="Hillier L.W."/>
            <person name="Willard H.F."/>
            <person name="Wilson R.K."/>
            <person name="Waterston R.H."/>
            <person name="Rice C.M."/>
            <person name="Vaudin M."/>
            <person name="Coulson A."/>
            <person name="Nelson D.L."/>
            <person name="Weinstock G."/>
            <person name="Sulston J.E."/>
            <person name="Durbin R.M."/>
            <person name="Hubbard T."/>
            <person name="Gibbs R.A."/>
            <person name="Beck S."/>
            <person name="Rogers J."/>
            <person name="Bentley D.R."/>
        </authorList>
    </citation>
    <scope>NUCLEOTIDE SEQUENCE [LARGE SCALE GENOMIC DNA]</scope>
</reference>
<reference key="6">
    <citation type="submission" date="2005-09" db="EMBL/GenBank/DDBJ databases">
        <authorList>
            <person name="Mural R.J."/>
            <person name="Istrail S."/>
            <person name="Sutton G.G."/>
            <person name="Florea L."/>
            <person name="Halpern A.L."/>
            <person name="Mobarry C.M."/>
            <person name="Lippert R."/>
            <person name="Walenz B."/>
            <person name="Shatkay H."/>
            <person name="Dew I."/>
            <person name="Miller J.R."/>
            <person name="Flanigan M.J."/>
            <person name="Edwards N.J."/>
            <person name="Bolanos R."/>
            <person name="Fasulo D."/>
            <person name="Halldorsson B.V."/>
            <person name="Hannenhalli S."/>
            <person name="Turner R."/>
            <person name="Yooseph S."/>
            <person name="Lu F."/>
            <person name="Nusskern D.R."/>
            <person name="Shue B.C."/>
            <person name="Zheng X.H."/>
            <person name="Zhong F."/>
            <person name="Delcher A.L."/>
            <person name="Huson D.H."/>
            <person name="Kravitz S.A."/>
            <person name="Mouchard L."/>
            <person name="Reinert K."/>
            <person name="Remington K.A."/>
            <person name="Clark A.G."/>
            <person name="Waterman M.S."/>
            <person name="Eichler E.E."/>
            <person name="Adams M.D."/>
            <person name="Hunkapiller M.W."/>
            <person name="Myers E.W."/>
            <person name="Venter J.C."/>
        </authorList>
    </citation>
    <scope>NUCLEOTIDE SEQUENCE [LARGE SCALE GENOMIC DNA]</scope>
</reference>
<reference key="7">
    <citation type="journal article" date="2004" name="Genome Res.">
        <title>The status, quality, and expansion of the NIH full-length cDNA project: the Mammalian Gene Collection (MGC).</title>
        <authorList>
            <consortium name="The MGC Project Team"/>
        </authorList>
    </citation>
    <scope>NUCLEOTIDE SEQUENCE [LARGE SCALE MRNA]</scope>
    <source>
        <tissue>Placenta</tissue>
    </source>
</reference>
<reference key="8">
    <citation type="journal article" date="2007" name="Mol. Cell. Biol.">
        <title>Calpain 6 is involved in microtubule stabilization and cytoskeletal organization.</title>
        <authorList>
            <person name="Tonami K."/>
            <person name="Kurihara Y."/>
            <person name="Aburatani H."/>
            <person name="Uchijima Y."/>
            <person name="Asano T."/>
            <person name="Kurihara H."/>
        </authorList>
    </citation>
    <scope>SUBCELLULAR LOCATION</scope>
    <scope>FUNCTION</scope>
    <scope>INTERACTION WITH MICROTUBULE</scope>
</reference>
<reference key="9">
    <citation type="journal article" date="2006" name="Science">
        <title>The consensus coding sequences of human breast and colorectal cancers.</title>
        <authorList>
            <person name="Sjoeblom T."/>
            <person name="Jones S."/>
            <person name="Wood L.D."/>
            <person name="Parsons D.W."/>
            <person name="Lin J."/>
            <person name="Barber T.D."/>
            <person name="Mandelker D."/>
            <person name="Leary R.J."/>
            <person name="Ptak J."/>
            <person name="Silliman N."/>
            <person name="Szabo S."/>
            <person name="Buckhaults P."/>
            <person name="Farrell C."/>
            <person name="Meeh P."/>
            <person name="Markowitz S.D."/>
            <person name="Willis J."/>
            <person name="Dawson D."/>
            <person name="Willson J.K.V."/>
            <person name="Gazdar A.F."/>
            <person name="Hartigan J."/>
            <person name="Wu L."/>
            <person name="Liu C."/>
            <person name="Parmigiani G."/>
            <person name="Park B.H."/>
            <person name="Bachman K.E."/>
            <person name="Papadopoulos N."/>
            <person name="Vogelstein B."/>
            <person name="Kinzler K.W."/>
            <person name="Velculescu V.E."/>
        </authorList>
    </citation>
    <scope>VARIANT [LARGE SCALE ANALYSIS] ARG-358</scope>
</reference>
<protein>
    <recommendedName>
        <fullName>Calpain-6</fullName>
    </recommendedName>
    <alternativeName>
        <fullName>Calpain-like protease X-linked</fullName>
    </alternativeName>
    <alternativeName>
        <fullName>Calpamodulin</fullName>
        <shortName>CalpM</shortName>
    </alternativeName>
</protein>
<gene>
    <name type="primary">CAPN6</name>
    <name type="synonym">CALPM</name>
    <name type="synonym">CANPX</name>
</gene>
<dbReference type="EMBL" id="AF029232">
    <property type="protein sequence ID" value="AAB86605.1"/>
    <property type="molecule type" value="mRNA"/>
</dbReference>
<dbReference type="EMBL" id="AJ000388">
    <property type="protein sequence ID" value="CAA04051.1"/>
    <property type="molecule type" value="mRNA"/>
</dbReference>
<dbReference type="EMBL" id="AY800242">
    <property type="protein sequence ID" value="AAV41896.1"/>
    <property type="molecule type" value="Genomic_DNA"/>
</dbReference>
<dbReference type="EMBL" id="AL031117">
    <property type="status" value="NOT_ANNOTATED_CDS"/>
    <property type="molecule type" value="Genomic_DNA"/>
</dbReference>
<dbReference type="EMBL" id="CH471120">
    <property type="protein sequence ID" value="EAX02650.1"/>
    <property type="molecule type" value="Genomic_DNA"/>
</dbReference>
<dbReference type="EMBL" id="CH471120">
    <property type="protein sequence ID" value="EAX02651.1"/>
    <property type="molecule type" value="Genomic_DNA"/>
</dbReference>
<dbReference type="EMBL" id="BC000730">
    <property type="protein sequence ID" value="AAH00730.1"/>
    <property type="molecule type" value="mRNA"/>
</dbReference>
<dbReference type="CCDS" id="CCDS14555.1"/>
<dbReference type="RefSeq" id="NP_055104.2">
    <property type="nucleotide sequence ID" value="NM_014289.3"/>
</dbReference>
<dbReference type="SMR" id="Q9Y6Q1"/>
<dbReference type="BioGRID" id="107277">
    <property type="interactions" value="29"/>
</dbReference>
<dbReference type="FunCoup" id="Q9Y6Q1">
    <property type="interactions" value="44"/>
</dbReference>
<dbReference type="IntAct" id="Q9Y6Q1">
    <property type="interactions" value="16"/>
</dbReference>
<dbReference type="MINT" id="Q9Y6Q1"/>
<dbReference type="STRING" id="9606.ENSP00000317214"/>
<dbReference type="MEROPS" id="C02.971"/>
<dbReference type="iPTMnet" id="Q9Y6Q1"/>
<dbReference type="PhosphoSitePlus" id="Q9Y6Q1"/>
<dbReference type="BioMuta" id="CAPN6"/>
<dbReference type="DMDM" id="13959315"/>
<dbReference type="jPOST" id="Q9Y6Q1"/>
<dbReference type="MassIVE" id="Q9Y6Q1"/>
<dbReference type="PaxDb" id="9606-ENSP00000317214"/>
<dbReference type="PeptideAtlas" id="Q9Y6Q1"/>
<dbReference type="ProteomicsDB" id="86759"/>
<dbReference type="Antibodypedia" id="29529">
    <property type="antibodies" value="212 antibodies from 33 providers"/>
</dbReference>
<dbReference type="DNASU" id="827"/>
<dbReference type="Ensembl" id="ENST00000324068.2">
    <property type="protein sequence ID" value="ENSP00000317214.1"/>
    <property type="gene ID" value="ENSG00000077274.9"/>
</dbReference>
<dbReference type="GeneID" id="827"/>
<dbReference type="KEGG" id="hsa:827"/>
<dbReference type="MANE-Select" id="ENST00000324068.2">
    <property type="protein sequence ID" value="ENSP00000317214.1"/>
    <property type="RefSeq nucleotide sequence ID" value="NM_014289.4"/>
    <property type="RefSeq protein sequence ID" value="NP_055104.2"/>
</dbReference>
<dbReference type="UCSC" id="uc004epc.3">
    <property type="organism name" value="human"/>
</dbReference>
<dbReference type="AGR" id="HGNC:1483"/>
<dbReference type="CTD" id="827"/>
<dbReference type="DisGeNET" id="827"/>
<dbReference type="GeneCards" id="CAPN6"/>
<dbReference type="HGNC" id="HGNC:1483">
    <property type="gene designation" value="CAPN6"/>
</dbReference>
<dbReference type="HPA" id="ENSG00000077274">
    <property type="expression patterns" value="Group enriched (epididymis, placenta, seminal vesicle)"/>
</dbReference>
<dbReference type="MIM" id="300146">
    <property type="type" value="gene"/>
</dbReference>
<dbReference type="neXtProt" id="NX_Q9Y6Q1"/>
<dbReference type="OpenTargets" id="ENSG00000077274"/>
<dbReference type="PharmGKB" id="PA26063"/>
<dbReference type="VEuPathDB" id="HostDB:ENSG00000077274"/>
<dbReference type="eggNOG" id="KOG0045">
    <property type="taxonomic scope" value="Eukaryota"/>
</dbReference>
<dbReference type="GeneTree" id="ENSGT00940000156128"/>
<dbReference type="HOGENOM" id="CLU_010982_3_2_1"/>
<dbReference type="InParanoid" id="Q9Y6Q1"/>
<dbReference type="OMA" id="QKGRYTD"/>
<dbReference type="OrthoDB" id="424753at2759"/>
<dbReference type="PAN-GO" id="Q9Y6Q1">
    <property type="GO annotations" value="1 GO annotation based on evolutionary models"/>
</dbReference>
<dbReference type="PhylomeDB" id="Q9Y6Q1"/>
<dbReference type="TreeFam" id="TF314748"/>
<dbReference type="BRENDA" id="3.4.22.B26">
    <property type="organism ID" value="2681"/>
</dbReference>
<dbReference type="PathwayCommons" id="Q9Y6Q1"/>
<dbReference type="Reactome" id="R-HSA-1474228">
    <property type="pathway name" value="Degradation of the extracellular matrix"/>
</dbReference>
<dbReference type="SignaLink" id="Q9Y6Q1"/>
<dbReference type="BioGRID-ORCS" id="827">
    <property type="hits" value="9 hits in 770 CRISPR screens"/>
</dbReference>
<dbReference type="ChiTaRS" id="CAPN6">
    <property type="organism name" value="human"/>
</dbReference>
<dbReference type="GenomeRNAi" id="827"/>
<dbReference type="Pharos" id="Q9Y6Q1">
    <property type="development level" value="Tbio"/>
</dbReference>
<dbReference type="PRO" id="PR:Q9Y6Q1"/>
<dbReference type="Proteomes" id="UP000005640">
    <property type="component" value="Chromosome X"/>
</dbReference>
<dbReference type="RNAct" id="Q9Y6Q1">
    <property type="molecule type" value="protein"/>
</dbReference>
<dbReference type="Bgee" id="ENSG00000077274">
    <property type="expression patterns" value="Expressed in cauda epididymis and 112 other cell types or tissues"/>
</dbReference>
<dbReference type="GO" id="GO:0005737">
    <property type="term" value="C:cytoplasm"/>
    <property type="evidence" value="ECO:0000318"/>
    <property type="project" value="GO_Central"/>
</dbReference>
<dbReference type="GO" id="GO:0048471">
    <property type="term" value="C:perinuclear region of cytoplasm"/>
    <property type="evidence" value="ECO:0000314"/>
    <property type="project" value="UniProtKB"/>
</dbReference>
<dbReference type="GO" id="GO:0005876">
    <property type="term" value="C:spindle microtubule"/>
    <property type="evidence" value="ECO:0000314"/>
    <property type="project" value="UniProtKB"/>
</dbReference>
<dbReference type="GO" id="GO:0004198">
    <property type="term" value="F:calcium-dependent cysteine-type endopeptidase activity"/>
    <property type="evidence" value="ECO:0000304"/>
    <property type="project" value="ProtInc"/>
</dbReference>
<dbReference type="GO" id="GO:0008017">
    <property type="term" value="F:microtubule binding"/>
    <property type="evidence" value="ECO:0000250"/>
    <property type="project" value="UniProtKB"/>
</dbReference>
<dbReference type="GO" id="GO:0001578">
    <property type="term" value="P:microtubule bundle formation"/>
    <property type="evidence" value="ECO:0000250"/>
    <property type="project" value="UniProtKB"/>
</dbReference>
<dbReference type="GO" id="GO:0051493">
    <property type="term" value="P:regulation of cytoskeleton organization"/>
    <property type="evidence" value="ECO:0000250"/>
    <property type="project" value="UniProtKB"/>
</dbReference>
<dbReference type="CDD" id="cd04046">
    <property type="entry name" value="C2_Calpain"/>
    <property type="match status" value="1"/>
</dbReference>
<dbReference type="CDD" id="cd00214">
    <property type="entry name" value="Calpain_III"/>
    <property type="match status" value="1"/>
</dbReference>
<dbReference type="CDD" id="cd00044">
    <property type="entry name" value="CysPc"/>
    <property type="match status" value="1"/>
</dbReference>
<dbReference type="FunFam" id="2.60.120.380:FF:000009">
    <property type="entry name" value="Calpain-6"/>
    <property type="match status" value="1"/>
</dbReference>
<dbReference type="FunFam" id="2.60.40.150:FF:000131">
    <property type="entry name" value="calpain-6"/>
    <property type="match status" value="1"/>
</dbReference>
<dbReference type="FunFam" id="3.90.70.10:FF:000064">
    <property type="entry name" value="calpain-6"/>
    <property type="match status" value="1"/>
</dbReference>
<dbReference type="Gene3D" id="2.60.120.380">
    <property type="match status" value="1"/>
</dbReference>
<dbReference type="Gene3D" id="2.60.40.150">
    <property type="entry name" value="C2 domain"/>
    <property type="match status" value="1"/>
</dbReference>
<dbReference type="Gene3D" id="3.90.70.10">
    <property type="entry name" value="Cysteine proteinases"/>
    <property type="match status" value="1"/>
</dbReference>
<dbReference type="InterPro" id="IPR033884">
    <property type="entry name" value="C2_Calpain"/>
</dbReference>
<dbReference type="InterPro" id="IPR000008">
    <property type="entry name" value="C2_dom"/>
</dbReference>
<dbReference type="InterPro" id="IPR035892">
    <property type="entry name" value="C2_domain_sf"/>
</dbReference>
<dbReference type="InterPro" id="IPR033883">
    <property type="entry name" value="C2_III"/>
</dbReference>
<dbReference type="InterPro" id="IPR022684">
    <property type="entry name" value="Calpain_cysteine_protease"/>
</dbReference>
<dbReference type="InterPro" id="IPR022682">
    <property type="entry name" value="Calpain_domain_III"/>
</dbReference>
<dbReference type="InterPro" id="IPR022683">
    <property type="entry name" value="Calpain_III"/>
</dbReference>
<dbReference type="InterPro" id="IPR036213">
    <property type="entry name" value="Calpain_III_sf"/>
</dbReference>
<dbReference type="InterPro" id="IPR038765">
    <property type="entry name" value="Papain-like_cys_pep_sf"/>
</dbReference>
<dbReference type="InterPro" id="IPR001300">
    <property type="entry name" value="Peptidase_C2_calpain_cat"/>
</dbReference>
<dbReference type="PANTHER" id="PTHR10183">
    <property type="entry name" value="CALPAIN"/>
    <property type="match status" value="1"/>
</dbReference>
<dbReference type="PANTHER" id="PTHR10183:SF381">
    <property type="entry name" value="CALPAIN-6"/>
    <property type="match status" value="1"/>
</dbReference>
<dbReference type="Pfam" id="PF00168">
    <property type="entry name" value="C2"/>
    <property type="match status" value="1"/>
</dbReference>
<dbReference type="Pfam" id="PF01067">
    <property type="entry name" value="Calpain_III"/>
    <property type="match status" value="1"/>
</dbReference>
<dbReference type="Pfam" id="PF00648">
    <property type="entry name" value="Peptidase_C2"/>
    <property type="match status" value="1"/>
</dbReference>
<dbReference type="PRINTS" id="PR00704">
    <property type="entry name" value="CALPAIN"/>
</dbReference>
<dbReference type="SMART" id="SM00239">
    <property type="entry name" value="C2"/>
    <property type="match status" value="1"/>
</dbReference>
<dbReference type="SMART" id="SM00720">
    <property type="entry name" value="calpain_III"/>
    <property type="match status" value="1"/>
</dbReference>
<dbReference type="SMART" id="SM00230">
    <property type="entry name" value="CysPc"/>
    <property type="match status" value="1"/>
</dbReference>
<dbReference type="SUPFAM" id="SSF49562">
    <property type="entry name" value="C2 domain (Calcium/lipid-binding domain, CaLB)"/>
    <property type="match status" value="1"/>
</dbReference>
<dbReference type="SUPFAM" id="SSF49758">
    <property type="entry name" value="Calpain large subunit, middle domain (domain III)"/>
    <property type="match status" value="1"/>
</dbReference>
<dbReference type="SUPFAM" id="SSF54001">
    <property type="entry name" value="Cysteine proteinases"/>
    <property type="match status" value="1"/>
</dbReference>
<dbReference type="PROSITE" id="PS50004">
    <property type="entry name" value="C2"/>
    <property type="match status" value="1"/>
</dbReference>
<dbReference type="PROSITE" id="PS50203">
    <property type="entry name" value="CALPAIN_CAT"/>
    <property type="match status" value="1"/>
</dbReference>
<sequence length="641" mass="74576">MGPPLKLFKNQKYQELKQECIKDSRLFCDPTFLPENDSLFYNRLLPGKVVWKRPQDICDDPHLIVGNISNHQLTQGRLGHKPMVSAFSCLAVQESHWTKTIPNHKEQEWDPQKTEKYAGIFHFRFWHFGEWTEVVIDDLLPTINGDLVFSFSTSMNEFWNALLEKAYAKLLGCYEALDGLTITDIIVDFTGTLAETVDMQKGRYTELVEEKYKLFGELYKTFTKGGLICCSIESPNQEEQEVETDWGLLKGHTYTMTDIRKIRLGERLVEVFSAEKVYMVRLRNPLGRQEWSGPWSEISEEWQQLTASDRKNLGLVMSDDGEFWMSLEDFCRNFHKLNVCRNVNNPIFGRKELESVLGCWTVDDDPLMNRSGGCYNNRDTFLQNPQYIFTVPEDGHKVIMSLQQKDLRTYRRMGRPDNYIIGFELFKVEMNRKFRLHHLYIQERAGTSTYIDTRTVFLSKYLKKGNYVLVPTMFQHGRTSEFLLRIFSEVPVQLRELTLDMPKMSCWNLARGYPKVVTQITVHSAEDLEKKYANETVNPYLVIKCGKEEVRSPVQKNTVHAIFDTQAIFYRRTTDIPIIVQVWNSRKFCDQFLGQVTLDADPSDCRDLKSLYLRKKGGPTAKVKQGHISFKVISSDDLTEL</sequence>
<evidence type="ECO:0000250" key="1"/>
<evidence type="ECO:0000255" key="2">
    <source>
        <dbReference type="PROSITE-ProRule" id="PRU00041"/>
    </source>
</evidence>
<evidence type="ECO:0000255" key="3">
    <source>
        <dbReference type="PROSITE-ProRule" id="PRU00239"/>
    </source>
</evidence>
<evidence type="ECO:0000269" key="4">
    <source>
    </source>
</evidence>
<evidence type="ECO:0000269" key="5">
    <source>
    </source>
</evidence>
<evidence type="ECO:0000269" key="6">
    <source ref="4"/>
</evidence>
<evidence type="ECO:0000305" key="7"/>
<comment type="function">
    <text evidence="1 5">Microtubule-stabilizing protein that may be involved in the regulation of microtubule dynamics and cytoskeletal organization. May act as a regulator of RAC1 activity through interaction with ARHGEF2 to control lamellipodial formation and cell mobility. Does not seem to have protease activity as it has lost the active site residues (By similarity).</text>
</comment>
<comment type="subunit">
    <text evidence="1">Interacts (via domain III) with microtubules. Interacts (via domain II) with ARHGEF2 (via the N-terminal zinc finger).</text>
</comment>
<comment type="interaction">
    <interactant intactId="EBI-7183095">
        <id>Q9Y6Q1</id>
    </interactant>
    <interactant intactId="EBI-10176632">
        <id>O43829</id>
        <label>ZBTB14</label>
    </interactant>
    <organismsDiffer>false</organismsDiffer>
    <experiments>3</experiments>
</comment>
<comment type="subcellular location">
    <subcellularLocation>
        <location evidence="5">Cytoplasm</location>
        <location evidence="5">Perinuclear region</location>
    </subcellularLocation>
    <subcellularLocation>
        <location evidence="5">Cytoplasm</location>
        <location evidence="5">Cytoskeleton</location>
        <location evidence="5">Spindle</location>
    </subcellularLocation>
    <text>During mitose associated with the mitotic spindle. At telophase colocalized to the midbody spindle.</text>
</comment>
<comment type="tissue specificity">
    <text>Expressed only in placenta.</text>
</comment>
<comment type="similarity">
    <text evidence="7">Belongs to the peptidase C2 family.</text>
</comment>
<keyword id="KW-0963">Cytoplasm</keyword>
<keyword id="KW-0206">Cytoskeleton</keyword>
<keyword id="KW-0493">Microtubule</keyword>
<keyword id="KW-1267">Proteomics identification</keyword>
<keyword id="KW-1185">Reference proteome</keyword>
<accession>Q9Y6Q1</accession>
<accession>D3DUY7</accession>
<accession>Q9UEQ1</accession>
<accession>Q9UJA8</accession>
<name>CAN6_HUMAN</name>